<reference key="1">
    <citation type="journal article" date="2008" name="Genome Biol.">
        <title>The complete genome, comparative and functional analysis of Stenotrophomonas maltophilia reveals an organism heavily shielded by drug resistance determinants.</title>
        <authorList>
            <person name="Crossman L.C."/>
            <person name="Gould V.C."/>
            <person name="Dow J.M."/>
            <person name="Vernikos G.S."/>
            <person name="Okazaki A."/>
            <person name="Sebaihia M."/>
            <person name="Saunders D."/>
            <person name="Arrowsmith C."/>
            <person name="Carver T."/>
            <person name="Peters N."/>
            <person name="Adlem E."/>
            <person name="Kerhornou A."/>
            <person name="Lord A."/>
            <person name="Murphy L."/>
            <person name="Seeger K."/>
            <person name="Squares R."/>
            <person name="Rutter S."/>
            <person name="Quail M.A."/>
            <person name="Rajandream M.A."/>
            <person name="Harris D."/>
            <person name="Churcher C."/>
            <person name="Bentley S.D."/>
            <person name="Parkhill J."/>
            <person name="Thomson N.R."/>
            <person name="Avison M.B."/>
        </authorList>
    </citation>
    <scope>NUCLEOTIDE SEQUENCE [LARGE SCALE GENOMIC DNA]</scope>
    <source>
        <strain>K279a</strain>
    </source>
</reference>
<protein>
    <recommendedName>
        <fullName evidence="1">Glucose-6-phosphate isomerase</fullName>
        <shortName evidence="1">GPI</shortName>
        <ecNumber evidence="1">5.3.1.9</ecNumber>
    </recommendedName>
    <alternativeName>
        <fullName evidence="1">Phosphoglucose isomerase</fullName>
        <shortName evidence="1">PGI</shortName>
    </alternativeName>
    <alternativeName>
        <fullName evidence="1">Phosphohexose isomerase</fullName>
        <shortName evidence="1">PHI</shortName>
    </alternativeName>
</protein>
<feature type="chain" id="PRO_1000125764" description="Glucose-6-phosphate isomerase">
    <location>
        <begin position="1"/>
        <end position="504"/>
    </location>
</feature>
<feature type="active site" description="Proton donor" evidence="1">
    <location>
        <position position="333"/>
    </location>
</feature>
<feature type="active site" evidence="1">
    <location>
        <position position="364"/>
    </location>
</feature>
<feature type="active site" evidence="1">
    <location>
        <position position="473"/>
    </location>
</feature>
<name>G6PI_STRMK</name>
<comment type="function">
    <text evidence="1">Catalyzes the reversible isomerization of glucose-6-phosphate to fructose-6-phosphate.</text>
</comment>
<comment type="catalytic activity">
    <reaction evidence="1">
        <text>alpha-D-glucose 6-phosphate = beta-D-fructose 6-phosphate</text>
        <dbReference type="Rhea" id="RHEA:11816"/>
        <dbReference type="ChEBI" id="CHEBI:57634"/>
        <dbReference type="ChEBI" id="CHEBI:58225"/>
        <dbReference type="EC" id="5.3.1.9"/>
    </reaction>
</comment>
<comment type="pathway">
    <text evidence="1">Carbohydrate biosynthesis; gluconeogenesis.</text>
</comment>
<comment type="pathway">
    <text evidence="1">Carbohydrate degradation; glycolysis; D-glyceraldehyde 3-phosphate and glycerone phosphate from D-glucose: step 2/4.</text>
</comment>
<comment type="subcellular location">
    <subcellularLocation>
        <location evidence="1">Cytoplasm</location>
    </subcellularLocation>
</comment>
<comment type="similarity">
    <text evidence="1">Belongs to the GPI family.</text>
</comment>
<accession>B2FL71</accession>
<proteinExistence type="inferred from homology"/>
<dbReference type="EC" id="5.3.1.9" evidence="1"/>
<dbReference type="EMBL" id="AM743169">
    <property type="protein sequence ID" value="CAQ45304.1"/>
    <property type="molecule type" value="Genomic_DNA"/>
</dbReference>
<dbReference type="RefSeq" id="WP_012479764.1">
    <property type="nucleotide sequence ID" value="NC_010943.1"/>
</dbReference>
<dbReference type="SMR" id="B2FL71"/>
<dbReference type="EnsemblBacteria" id="CAQ45304">
    <property type="protein sequence ID" value="CAQ45304"/>
    <property type="gene ID" value="Smlt1783"/>
</dbReference>
<dbReference type="KEGG" id="sml:Smlt1783"/>
<dbReference type="PATRIC" id="fig|522373.3.peg.1704"/>
<dbReference type="eggNOG" id="COG0166">
    <property type="taxonomic scope" value="Bacteria"/>
</dbReference>
<dbReference type="HOGENOM" id="CLU_017947_3_1_6"/>
<dbReference type="UniPathway" id="UPA00109">
    <property type="reaction ID" value="UER00181"/>
</dbReference>
<dbReference type="UniPathway" id="UPA00138"/>
<dbReference type="Proteomes" id="UP000008840">
    <property type="component" value="Chromosome"/>
</dbReference>
<dbReference type="GO" id="GO:0005829">
    <property type="term" value="C:cytosol"/>
    <property type="evidence" value="ECO:0007669"/>
    <property type="project" value="TreeGrafter"/>
</dbReference>
<dbReference type="GO" id="GO:0097367">
    <property type="term" value="F:carbohydrate derivative binding"/>
    <property type="evidence" value="ECO:0007669"/>
    <property type="project" value="InterPro"/>
</dbReference>
<dbReference type="GO" id="GO:0004347">
    <property type="term" value="F:glucose-6-phosphate isomerase activity"/>
    <property type="evidence" value="ECO:0007669"/>
    <property type="project" value="UniProtKB-UniRule"/>
</dbReference>
<dbReference type="GO" id="GO:0048029">
    <property type="term" value="F:monosaccharide binding"/>
    <property type="evidence" value="ECO:0007669"/>
    <property type="project" value="TreeGrafter"/>
</dbReference>
<dbReference type="GO" id="GO:0006094">
    <property type="term" value="P:gluconeogenesis"/>
    <property type="evidence" value="ECO:0007669"/>
    <property type="project" value="UniProtKB-UniRule"/>
</dbReference>
<dbReference type="GO" id="GO:0051156">
    <property type="term" value="P:glucose 6-phosphate metabolic process"/>
    <property type="evidence" value="ECO:0007669"/>
    <property type="project" value="TreeGrafter"/>
</dbReference>
<dbReference type="GO" id="GO:0006096">
    <property type="term" value="P:glycolytic process"/>
    <property type="evidence" value="ECO:0007669"/>
    <property type="project" value="UniProtKB-UniRule"/>
</dbReference>
<dbReference type="CDD" id="cd05015">
    <property type="entry name" value="SIS_PGI_1"/>
    <property type="match status" value="1"/>
</dbReference>
<dbReference type="CDD" id="cd05016">
    <property type="entry name" value="SIS_PGI_2"/>
    <property type="match status" value="1"/>
</dbReference>
<dbReference type="Gene3D" id="1.10.1390.10">
    <property type="match status" value="1"/>
</dbReference>
<dbReference type="Gene3D" id="3.40.50.10490">
    <property type="entry name" value="Glucose-6-phosphate isomerase like protein, domain 1"/>
    <property type="match status" value="2"/>
</dbReference>
<dbReference type="HAMAP" id="MF_00473">
    <property type="entry name" value="G6P_isomerase"/>
    <property type="match status" value="1"/>
</dbReference>
<dbReference type="InterPro" id="IPR001672">
    <property type="entry name" value="G6P_Isomerase"/>
</dbReference>
<dbReference type="InterPro" id="IPR023096">
    <property type="entry name" value="G6P_Isomerase_C"/>
</dbReference>
<dbReference type="InterPro" id="IPR018189">
    <property type="entry name" value="Phosphoglucose_isomerase_CS"/>
</dbReference>
<dbReference type="InterPro" id="IPR046348">
    <property type="entry name" value="SIS_dom_sf"/>
</dbReference>
<dbReference type="InterPro" id="IPR035476">
    <property type="entry name" value="SIS_PGI_1"/>
</dbReference>
<dbReference type="InterPro" id="IPR035482">
    <property type="entry name" value="SIS_PGI_2"/>
</dbReference>
<dbReference type="NCBIfam" id="NF001211">
    <property type="entry name" value="PRK00179.1"/>
    <property type="match status" value="1"/>
</dbReference>
<dbReference type="PANTHER" id="PTHR11469">
    <property type="entry name" value="GLUCOSE-6-PHOSPHATE ISOMERASE"/>
    <property type="match status" value="1"/>
</dbReference>
<dbReference type="PANTHER" id="PTHR11469:SF1">
    <property type="entry name" value="GLUCOSE-6-PHOSPHATE ISOMERASE"/>
    <property type="match status" value="1"/>
</dbReference>
<dbReference type="Pfam" id="PF00342">
    <property type="entry name" value="PGI"/>
    <property type="match status" value="1"/>
</dbReference>
<dbReference type="PRINTS" id="PR00662">
    <property type="entry name" value="G6PISOMERASE"/>
</dbReference>
<dbReference type="SUPFAM" id="SSF53697">
    <property type="entry name" value="SIS domain"/>
    <property type="match status" value="1"/>
</dbReference>
<dbReference type="PROSITE" id="PS00765">
    <property type="entry name" value="P_GLUCOSE_ISOMERASE_1"/>
    <property type="match status" value="1"/>
</dbReference>
<dbReference type="PROSITE" id="PS00174">
    <property type="entry name" value="P_GLUCOSE_ISOMERASE_2"/>
    <property type="match status" value="1"/>
</dbReference>
<dbReference type="PROSITE" id="PS51463">
    <property type="entry name" value="P_GLUCOSE_ISOMERASE_3"/>
    <property type="match status" value="1"/>
</dbReference>
<evidence type="ECO:0000255" key="1">
    <source>
        <dbReference type="HAMAP-Rule" id="MF_00473"/>
    </source>
</evidence>
<sequence>MTTNNGFDSLHSHAQRLKGASIPGLLAAEPGRVQDLALRVGPLYVNFARQKYDAAALQALLALAADRDVGGAITRLFRGEQVNLTEGRAALHTALRGDVVDAPVAAEAYATAREIRQRMGVLVRALEDSGVTDVVSVGIGGSDLGPRLVADALRPVSGARLRVHFVSNVDGAAMQRTLATLDPAKTAGILISKTFGTQETLLNGQILHDWLGGSDRLYAVSANPERAAKAFAIAADRVLPMWDWVGGRYSLWSAVGFPIALAIGFERFEQLLEGAAQMDAHALDAPLERNLPVLHGLTDIWNRNLLGHATHAVMTYDQRLALLPAYLQQLVMESLGKRVQRDGQPVTTDTVPVWWGGAGTDVQHSFFQALHQGTSIVPADFIGCVHNDDPYTINHQALLANLLAQTEALANGQGSDDPHRDYPGGRPSTLILLDALTPQALGALIAMYEHAVYVQSVIWNINAFDQFGVELGKQLASGLLPALQGEDVAVADPMTREILAQLKG</sequence>
<keyword id="KW-0963">Cytoplasm</keyword>
<keyword id="KW-0312">Gluconeogenesis</keyword>
<keyword id="KW-0324">Glycolysis</keyword>
<keyword id="KW-0413">Isomerase</keyword>
<keyword id="KW-1185">Reference proteome</keyword>
<organism>
    <name type="scientific">Stenotrophomonas maltophilia (strain K279a)</name>
    <dbReference type="NCBI Taxonomy" id="522373"/>
    <lineage>
        <taxon>Bacteria</taxon>
        <taxon>Pseudomonadati</taxon>
        <taxon>Pseudomonadota</taxon>
        <taxon>Gammaproteobacteria</taxon>
        <taxon>Lysobacterales</taxon>
        <taxon>Lysobacteraceae</taxon>
        <taxon>Stenotrophomonas</taxon>
        <taxon>Stenotrophomonas maltophilia group</taxon>
    </lineage>
</organism>
<gene>
    <name evidence="1" type="primary">pgi</name>
    <name type="ordered locus">Smlt1783</name>
</gene>